<feature type="chain" id="PRO_0000439390" description="Transcription factor bHLH138">
    <location>
        <begin position="1"/>
        <end position="129"/>
    </location>
</feature>
<feature type="domain" description="bHLH" evidence="1">
    <location>
        <begin position="19"/>
        <end position="68"/>
    </location>
</feature>
<feature type="region of interest" description="Disordered" evidence="2">
    <location>
        <begin position="1"/>
        <end position="24"/>
    </location>
</feature>
<feature type="compositionally biased region" description="Basic and acidic residues" evidence="2">
    <location>
        <begin position="1"/>
        <end position="18"/>
    </location>
</feature>
<dbReference type="EMBL" id="AC006593">
    <property type="status" value="NOT_ANNOTATED_CDS"/>
    <property type="molecule type" value="Genomic_DNA"/>
</dbReference>
<dbReference type="EMBL" id="CP002685">
    <property type="protein sequence ID" value="AEC08509.1"/>
    <property type="molecule type" value="Genomic_DNA"/>
</dbReference>
<dbReference type="RefSeq" id="NP_850161.1">
    <property type="nucleotide sequence ID" value="NM_179830.1"/>
</dbReference>
<dbReference type="SMR" id="F4IQQ9"/>
<dbReference type="FunCoup" id="F4IQQ9">
    <property type="interactions" value="124"/>
</dbReference>
<dbReference type="STRING" id="3702.F4IQQ9"/>
<dbReference type="PaxDb" id="3702-AT2G31215.1"/>
<dbReference type="EnsemblPlants" id="AT2G31215.1">
    <property type="protein sequence ID" value="AT2G31215.1"/>
    <property type="gene ID" value="AT2G31215"/>
</dbReference>
<dbReference type="GeneID" id="817678"/>
<dbReference type="Gramene" id="AT2G31215.1">
    <property type="protein sequence ID" value="AT2G31215.1"/>
    <property type="gene ID" value="AT2G31215"/>
</dbReference>
<dbReference type="KEGG" id="ath:AT2G31215"/>
<dbReference type="Araport" id="AT2G31215"/>
<dbReference type="TAIR" id="AT2G31215"/>
<dbReference type="HOGENOM" id="CLU_1951731_0_0_1"/>
<dbReference type="InParanoid" id="F4IQQ9"/>
<dbReference type="PhylomeDB" id="F4IQQ9"/>
<dbReference type="PRO" id="PR:F4IQQ9"/>
<dbReference type="Proteomes" id="UP000006548">
    <property type="component" value="Chromosome 2"/>
</dbReference>
<dbReference type="ExpressionAtlas" id="F4IQQ9">
    <property type="expression patterns" value="baseline"/>
</dbReference>
<dbReference type="GO" id="GO:0005634">
    <property type="term" value="C:nucleus"/>
    <property type="evidence" value="ECO:0007669"/>
    <property type="project" value="UniProtKB-SubCell"/>
</dbReference>
<dbReference type="GO" id="GO:0003677">
    <property type="term" value="F:DNA binding"/>
    <property type="evidence" value="ECO:0007669"/>
    <property type="project" value="UniProtKB-KW"/>
</dbReference>
<dbReference type="GO" id="GO:0003700">
    <property type="term" value="F:DNA-binding transcription factor activity"/>
    <property type="evidence" value="ECO:0000250"/>
    <property type="project" value="TAIR"/>
</dbReference>
<dbReference type="GO" id="GO:0046983">
    <property type="term" value="F:protein dimerization activity"/>
    <property type="evidence" value="ECO:0007669"/>
    <property type="project" value="InterPro"/>
</dbReference>
<dbReference type="GO" id="GO:0048658">
    <property type="term" value="P:anther wall tapetum development"/>
    <property type="evidence" value="ECO:0007669"/>
    <property type="project" value="InterPro"/>
</dbReference>
<dbReference type="CDD" id="cd18918">
    <property type="entry name" value="bHLH_AtMYC1_like"/>
    <property type="match status" value="1"/>
</dbReference>
<dbReference type="Gene3D" id="4.10.280.10">
    <property type="entry name" value="Helix-loop-helix DNA-binding domain"/>
    <property type="match status" value="1"/>
</dbReference>
<dbReference type="InterPro" id="IPR045895">
    <property type="entry name" value="bHLH91-like"/>
</dbReference>
<dbReference type="InterPro" id="IPR011598">
    <property type="entry name" value="bHLH_dom"/>
</dbReference>
<dbReference type="InterPro" id="IPR036638">
    <property type="entry name" value="HLH_DNA-bd_sf"/>
</dbReference>
<dbReference type="InterPro" id="IPR045896">
    <property type="entry name" value="MYC1-like_bHLH"/>
</dbReference>
<dbReference type="PANTHER" id="PTHR46834:SF10">
    <property type="entry name" value="TRANSCRIPTION FACTOR BHLH138-RELATED"/>
    <property type="match status" value="1"/>
</dbReference>
<dbReference type="PANTHER" id="PTHR46834">
    <property type="entry name" value="TRANSCRIPTION FACTOR BHLH91"/>
    <property type="match status" value="1"/>
</dbReference>
<dbReference type="Pfam" id="PF00010">
    <property type="entry name" value="HLH"/>
    <property type="match status" value="1"/>
</dbReference>
<dbReference type="SMART" id="SM00353">
    <property type="entry name" value="HLH"/>
    <property type="match status" value="1"/>
</dbReference>
<dbReference type="SUPFAM" id="SSF47459">
    <property type="entry name" value="HLH, helix-loop-helix DNA-binding domain"/>
    <property type="match status" value="1"/>
</dbReference>
<dbReference type="PROSITE" id="PS50888">
    <property type="entry name" value="BHLH"/>
    <property type="match status" value="1"/>
</dbReference>
<proteinExistence type="inferred from homology"/>
<accession>F4IQQ9</accession>
<reference key="1">
    <citation type="journal article" date="1999" name="Nature">
        <title>Sequence and analysis of chromosome 2 of the plant Arabidopsis thaliana.</title>
        <authorList>
            <person name="Lin X."/>
            <person name="Kaul S."/>
            <person name="Rounsley S.D."/>
            <person name="Shea T.P."/>
            <person name="Benito M.-I."/>
            <person name="Town C.D."/>
            <person name="Fujii C.Y."/>
            <person name="Mason T.M."/>
            <person name="Bowman C.L."/>
            <person name="Barnstead M.E."/>
            <person name="Feldblyum T.V."/>
            <person name="Buell C.R."/>
            <person name="Ketchum K.A."/>
            <person name="Lee J.J."/>
            <person name="Ronning C.M."/>
            <person name="Koo H.L."/>
            <person name="Moffat K.S."/>
            <person name="Cronin L.A."/>
            <person name="Shen M."/>
            <person name="Pai G."/>
            <person name="Van Aken S."/>
            <person name="Umayam L."/>
            <person name="Tallon L.J."/>
            <person name="Gill J.E."/>
            <person name="Adams M.D."/>
            <person name="Carrera A.J."/>
            <person name="Creasy T.H."/>
            <person name="Goodman H.M."/>
            <person name="Somerville C.R."/>
            <person name="Copenhaver G.P."/>
            <person name="Preuss D."/>
            <person name="Nierman W.C."/>
            <person name="White O."/>
            <person name="Eisen J.A."/>
            <person name="Salzberg S.L."/>
            <person name="Fraser C.M."/>
            <person name="Venter J.C."/>
        </authorList>
    </citation>
    <scope>NUCLEOTIDE SEQUENCE [LARGE SCALE GENOMIC DNA]</scope>
    <source>
        <strain>cv. Columbia</strain>
    </source>
</reference>
<reference key="2">
    <citation type="journal article" date="2017" name="Plant J.">
        <title>Araport11: a complete reannotation of the Arabidopsis thaliana reference genome.</title>
        <authorList>
            <person name="Cheng C.Y."/>
            <person name="Krishnakumar V."/>
            <person name="Chan A.P."/>
            <person name="Thibaud-Nissen F."/>
            <person name="Schobel S."/>
            <person name="Town C.D."/>
        </authorList>
    </citation>
    <scope>GENOME REANNOTATION</scope>
    <source>
        <strain>cv. Columbia</strain>
    </source>
</reference>
<reference key="3">
    <citation type="journal article" date="2003" name="Plant Cell">
        <title>Update on the basic helix-loop-helix transcription factor gene family in Arabidopsis thaliana.</title>
        <authorList>
            <person name="Bailey P.C."/>
            <person name="Martin C."/>
            <person name="Toledo-Ortiz G."/>
            <person name="Quail P.H."/>
            <person name="Huq E."/>
            <person name="Heim M.A."/>
            <person name="Jakoby M."/>
            <person name="Werber M."/>
            <person name="Weisshaar B."/>
        </authorList>
    </citation>
    <scope>GENE FAMILY</scope>
    <scope>NOMENCLATURE</scope>
</reference>
<comment type="subcellular location">
    <subcellularLocation>
        <location evidence="1">Nucleus</location>
    </subcellularLocation>
</comment>
<comment type="similarity">
    <text evidence="4">Belongs to the bHLH protein family.</text>
</comment>
<name>BH138_ARATH</name>
<protein>
    <recommendedName>
        <fullName>Transcription factor bHLH138</fullName>
    </recommendedName>
    <alternativeName>
        <fullName>Basic helix-loop-helix protein 138</fullName>
        <shortName evidence="3">AtbHLH138</shortName>
        <shortName>bHLH 138</shortName>
    </alternativeName>
    <alternativeName>
        <fullName>bHLH transcription factor bHLH138</fullName>
    </alternativeName>
</protein>
<gene>
    <name evidence="3" type="primary">BHLH138</name>
    <name evidence="5" type="ordered locus">At2g31215</name>
    <name evidence="6" type="ORF">F16D14</name>
</gene>
<evidence type="ECO:0000255" key="1">
    <source>
        <dbReference type="PROSITE-ProRule" id="PRU00981"/>
    </source>
</evidence>
<evidence type="ECO:0000256" key="2">
    <source>
        <dbReference type="SAM" id="MobiDB-lite"/>
    </source>
</evidence>
<evidence type="ECO:0000303" key="3">
    <source>
    </source>
</evidence>
<evidence type="ECO:0000305" key="4"/>
<evidence type="ECO:0000312" key="5">
    <source>
        <dbReference type="Araport" id="AT2G31215"/>
    </source>
</evidence>
<evidence type="ECO:0000312" key="6">
    <source>
        <dbReference type="EMBL" id="AC006593"/>
    </source>
</evidence>
<sequence>MERYTKKNERFKAEEGKGSKKSRTFLTERERRALFNDRFFDLKNLIPNPTKGGEASIVQDGIVYINELQRLVSELKYLVEKKKCGARHNNIEVDNKNTIYGTSKIEHPFSKNKNTFNCLIRTLRFVHHF</sequence>
<organism>
    <name type="scientific">Arabidopsis thaliana</name>
    <name type="common">Mouse-ear cress</name>
    <dbReference type="NCBI Taxonomy" id="3702"/>
    <lineage>
        <taxon>Eukaryota</taxon>
        <taxon>Viridiplantae</taxon>
        <taxon>Streptophyta</taxon>
        <taxon>Embryophyta</taxon>
        <taxon>Tracheophyta</taxon>
        <taxon>Spermatophyta</taxon>
        <taxon>Magnoliopsida</taxon>
        <taxon>eudicotyledons</taxon>
        <taxon>Gunneridae</taxon>
        <taxon>Pentapetalae</taxon>
        <taxon>rosids</taxon>
        <taxon>malvids</taxon>
        <taxon>Brassicales</taxon>
        <taxon>Brassicaceae</taxon>
        <taxon>Camelineae</taxon>
        <taxon>Arabidopsis</taxon>
    </lineage>
</organism>
<keyword id="KW-0238">DNA-binding</keyword>
<keyword id="KW-0539">Nucleus</keyword>
<keyword id="KW-1185">Reference proteome</keyword>
<keyword id="KW-0804">Transcription</keyword>
<keyword id="KW-0805">Transcription regulation</keyword>